<organism>
    <name type="scientific">Chlamydia trachomatis serovar D (strain ATCC VR-885 / DSM 19411 / UW-3/Cx)</name>
    <dbReference type="NCBI Taxonomy" id="272561"/>
    <lineage>
        <taxon>Bacteria</taxon>
        <taxon>Pseudomonadati</taxon>
        <taxon>Chlamydiota</taxon>
        <taxon>Chlamydiia</taxon>
        <taxon>Chlamydiales</taxon>
        <taxon>Chlamydiaceae</taxon>
        <taxon>Chlamydia/Chlamydophila group</taxon>
        <taxon>Chlamydia</taxon>
    </lineage>
</organism>
<gene>
    <name type="primary">incA</name>
    <name type="ordered locus">CT_119</name>
</gene>
<accession>P0CI27</accession>
<accession>O84121</accession>
<accession>Q99Q56</accession>
<accession>Q9AM94</accession>
<accession>Q9AMA7</accession>
<accession>Q9AMA8</accession>
<accession>Q9AMA9</accession>
<accession>Q9AMB0</accession>
<accession>Q9AMB1</accession>
<accession>Q9F7K9</accession>
<accession>Q9RFX7</accession>
<keyword id="KW-0002">3D-structure</keyword>
<keyword id="KW-0175">Coiled coil</keyword>
<keyword id="KW-1043">Host membrane</keyword>
<keyword id="KW-0472">Membrane</keyword>
<keyword id="KW-1185">Reference proteome</keyword>
<keyword id="KW-0964">Secreted</keyword>
<keyword id="KW-0812">Transmembrane</keyword>
<keyword id="KW-1133">Transmembrane helix</keyword>
<keyword id="KW-0843">Virulence</keyword>
<protein>
    <recommendedName>
        <fullName>Inclusion membrane protein A</fullName>
    </recommendedName>
</protein>
<comment type="function">
    <text evidence="1">Chlamydia replicate within an intracellular vacuole, termed an inclusion. IncA is probably involved in the homotypic fusion of inclusions.</text>
</comment>
<comment type="subunit">
    <text evidence="1">Forms homooligomers.</text>
</comment>
<comment type="subcellular location">
    <subcellularLocation>
        <location evidence="1">Secreted</location>
    </subcellularLocation>
    <subcellularLocation>
        <location evidence="4 6 7">Host vacuole</location>
        <location evidence="4 6 7">Host pathogen-containing vacuole</location>
        <location evidence="4 6 7">Host pathogen-containing vacuole membrane</location>
        <topology evidence="2">Multi-pass membrane protein</topology>
    </subcellularLocation>
    <text evidence="1 4 6 7">Secreted, probably by a type III secretion system (Probable) (PubMed:9826388). Localized in the inclusion membrane (Probable) (PubMed:9826388). In the inclusion, the C-terminus faces the host cytosol (By similarity).</text>
</comment>
<comment type="domain">
    <text evidence="1">IncA proteins share the same general organization: a short N-terminal domain, a large bilobed hydrophobic domain, and a C-terminal cytoplasmic domain.</text>
</comment>
<comment type="similarity">
    <text evidence="5">Belongs to the IncA family.</text>
</comment>
<reference key="1">
    <citation type="journal article" date="2000" name="Infect. Immun.">
        <title>Isolates of Chlamydia trachomatis that occupy nonfusogenic inclusions lack IncA, a protein localized to the inclusion membrane.</title>
        <authorList>
            <person name="Suchland R.J."/>
            <person name="Rockey D.D."/>
            <person name="Bannantine J.P."/>
            <person name="Stamm W.E."/>
        </authorList>
    </citation>
    <scope>NUCLEOTIDE SEQUENCE [GENOMIC DNA]</scope>
    <scope>SUBCELLULAR LOCATION</scope>
    <source>
        <strain>D(s)/2923</strain>
    </source>
</reference>
<reference key="2">
    <citation type="journal article" date="2001" name="Infect. Immun.">
        <title>Normal IncA expression and fusogenicity of inclusions in Chlamydia trachomatis isolates with the incA I47T mutation.</title>
        <authorList>
            <person name="Pannekoek Y."/>
            <person name="van der Ende A."/>
            <person name="Eijk P.P."/>
            <person name="van Marle J."/>
            <person name="de Witte M.A."/>
            <person name="Ossewaarde J.M."/>
            <person name="van den Brule A.J.C."/>
            <person name="Morre S.A."/>
            <person name="Dankert J."/>
        </authorList>
    </citation>
    <scope>NUCLEOTIDE SEQUENCE [GENOMIC DNA]</scope>
    <scope>SUBCELLULAR LOCATION</scope>
    <source>
        <strain>A/Sa-1</strain>
        <strain>Ba/Apache-2</strain>
        <strain>C/UW-1</strain>
        <strain>D'</strain>
        <strain>D-/NL-326</strain>
        <strain>D/IC-CAL8</strain>
        <strain>Da/MT-566</strain>
        <strain>E/10a</strain>
        <strain>E/11a</strain>
        <strain>E/12a</strain>
        <strain>E/2b</strain>
        <strain>E/4a</strain>
        <strain>E/7a</strain>
        <strain>E/DK-20</strain>
        <strain>F/MRC-301</strain>
        <strain>G/IOL-238</strain>
        <strain>H/UW-4</strain>
        <strain>I'</strain>
        <strain>I/UW-12</strain>
        <strain>J/UW-36</strain>
        <strain>K/UW-31</strain>
    </source>
</reference>
<reference key="3">
    <citation type="journal article" date="2002" name="Microbiology">
        <title>Diversity within inc genes of clinical Chlamydia trachomatis variant isolates that occupy non-fusogenic inclusions.</title>
        <authorList>
            <person name="Rockey D.D."/>
            <person name="Viratyosin W."/>
            <person name="Bannantine J.P."/>
            <person name="Suchland R.J."/>
            <person name="Stamm W.E."/>
        </authorList>
    </citation>
    <scope>NUCLEOTIDE SEQUENCE [GENOMIC DNA]</scope>
    <source>
        <strain>B9227</strain>
        <strain>D-9291</strain>
        <strain>F9334</strain>
        <strain>G(s)/459</strain>
        <strain>Ia/9309</strain>
        <strain>J(s)/5942</strain>
        <strain>J9329</strain>
        <strain>J9336</strain>
        <strain>J9346</strain>
    </source>
</reference>
<reference key="4">
    <citation type="journal article" date="1998" name="Science">
        <title>Genome sequence of an obligate intracellular pathogen of humans: Chlamydia trachomatis.</title>
        <authorList>
            <person name="Stephens R.S."/>
            <person name="Kalman S."/>
            <person name="Lammel C.J."/>
            <person name="Fan J."/>
            <person name="Marathe R."/>
            <person name="Aravind L."/>
            <person name="Mitchell W.P."/>
            <person name="Olinger L."/>
            <person name="Tatusov R.L."/>
            <person name="Zhao Q."/>
            <person name="Koonin E.V."/>
            <person name="Davis R.W."/>
        </authorList>
    </citation>
    <scope>NUCLEOTIDE SEQUENCE [LARGE SCALE GENOMIC DNA]</scope>
    <source>
        <strain>ATCC VR-885 / DSM 19411 / UW-3/Cx</strain>
    </source>
</reference>
<reference key="5">
    <citation type="journal article" date="1998" name="Infect. Immun.">
        <title>Chlamydia trachomatis IncA is localized to the inclusion membrane and is recognized by antisera from infected humans and primates.</title>
        <authorList>
            <person name="Bannantine J.P."/>
            <person name="Stamm W.E."/>
            <person name="Suchland R.J."/>
            <person name="Rockey D.D."/>
        </authorList>
    </citation>
    <scope>SUBCELLULAR LOCATION</scope>
    <source>
        <strain>ATCC VR-885 / DSM 19411 / UW-3/Cx</strain>
    </source>
</reference>
<name>INCA_CHLTR</name>
<sequence length="273" mass="30327">MTTPTLIVTPPSPPAPSYSANRVPQPSLMDKIKKIAAIASLILIGTIGFLALLGHLVGFLIAPQITIVLLALFIISLAGNALYLQKTANLHLYQDLQREVGSLKEINFMLSVLQKEFLHLSKEFATTSKDLSAVSQDFYSCLQGFRDNYKGFESLLDEYKNSTEEMRKLFSQEIIADLKGSVASLREEIRFLTPLAEEVRRLAHNQQSLTVVIEELKTIRDSLRDEIGQLSQLSKTLTSQIALQRKESSDLCSQIRETLSSPRKSASPSTKSS</sequence>
<feature type="chain" id="PRO_0000084196" description="Inclusion membrane protein A">
    <location>
        <begin position="1"/>
        <end position="273"/>
    </location>
</feature>
<feature type="transmembrane region" description="Helical" evidence="2">
    <location>
        <begin position="41"/>
        <end position="61"/>
    </location>
</feature>
<feature type="transmembrane region" description="Helical" evidence="2">
    <location>
        <begin position="64"/>
        <end position="84"/>
    </location>
</feature>
<feature type="region of interest" description="Disordered" evidence="3">
    <location>
        <begin position="1"/>
        <end position="20"/>
    </location>
</feature>
<feature type="region of interest" description="Disordered" evidence="3">
    <location>
        <begin position="254"/>
        <end position="273"/>
    </location>
</feature>
<feature type="coiled-coil region" evidence="2">
    <location>
        <begin position="172"/>
        <end position="233"/>
    </location>
</feature>
<feature type="sequence variant" description="In strain: D(s)/2923, D/IC-CAL8, D', F9334, D-9291, J9336, J9346, J(s)/5942, E/DK-20, F/MRC-301, E/4a, E/12a and E/7a.">
    <original>I</original>
    <variation>T</variation>
    <location>
        <position position="47"/>
    </location>
</feature>
<feature type="sequence variant" description="In strain: H/UW-4.">
    <original>A</original>
    <variation>T</variation>
    <location>
        <position position="62"/>
    </location>
</feature>
<feature type="sequence variant" description="In strain: C/UW-1.">
    <original>L</original>
    <variation>P</variation>
    <location>
        <position position="90"/>
    </location>
</feature>
<feature type="sequence variant" description="In strain: D(s)2923, D/IC-CAL8, D', F9334, D-9291, J9336 and J9346.">
    <original>E</original>
    <variation>K</variation>
    <location>
        <position position="116"/>
    </location>
</feature>
<feature type="sequence variant" description="In strain: Da/MT-566.">
    <original>H</original>
    <variation>L</variation>
    <location>
        <position position="119"/>
    </location>
</feature>
<feature type="sequence variant" description="In strain: Da/MT-566.">
    <original>G</original>
    <variation>D</variation>
    <location>
        <position position="180"/>
    </location>
</feature>
<feature type="sequence variant" description="In strain: J9329 and Ia/9309.">
    <original>T</original>
    <variation>I</variation>
    <location>
        <position position="218"/>
    </location>
</feature>
<feature type="sequence variant" description="In strain: B9227.">
    <original>S</original>
    <variation>N</variation>
    <location>
        <position position="222"/>
    </location>
</feature>
<feature type="sequence variant" description="In strain: C/UW-1.">
    <original>C</original>
    <variation>R</variation>
    <location>
        <position position="252"/>
    </location>
</feature>
<feature type="sequence variant" description="In strain: K/UW-31.">
    <original>S</original>
    <variation>P</variation>
    <location>
        <position position="260"/>
    </location>
</feature>
<feature type="sequence variant" description="In strain: I/UW-12.">
    <original>S</original>
    <variation>F</variation>
    <location>
        <position position="261"/>
    </location>
</feature>
<feature type="helix" evidence="8">
    <location>
        <begin position="89"/>
        <end position="123"/>
    </location>
</feature>
<feature type="turn" evidence="8">
    <location>
        <begin position="124"/>
        <end position="127"/>
    </location>
</feature>
<feature type="helix" evidence="8">
    <location>
        <begin position="129"/>
        <end position="142"/>
    </location>
</feature>
<feature type="helix" evidence="8">
    <location>
        <begin position="145"/>
        <end position="149"/>
    </location>
</feature>
<feature type="helix" evidence="8">
    <location>
        <begin position="150"/>
        <end position="158"/>
    </location>
</feature>
<feature type="helix" evidence="8">
    <location>
        <begin position="164"/>
        <end position="167"/>
    </location>
</feature>
<feature type="helix" evidence="8">
    <location>
        <begin position="172"/>
        <end position="192"/>
    </location>
</feature>
<feature type="helix" evidence="8">
    <location>
        <begin position="195"/>
        <end position="204"/>
    </location>
</feature>
<feature type="helix" evidence="8">
    <location>
        <begin position="210"/>
        <end position="246"/>
    </location>
</feature>
<dbReference type="EMBL" id="AF163773">
    <property type="protein sequence ID" value="AAD48440.1"/>
    <property type="molecule type" value="Genomic_DNA"/>
</dbReference>
<dbReference type="EMBL" id="AF326992">
    <property type="protein sequence ID" value="AAG61089.1"/>
    <property type="molecule type" value="Genomic_DNA"/>
</dbReference>
<dbReference type="EMBL" id="AF326994">
    <property type="protein sequence ID" value="AAG61091.1"/>
    <property type="molecule type" value="Genomic_DNA"/>
</dbReference>
<dbReference type="EMBL" id="AF326995">
    <property type="protein sequence ID" value="AAG61092.1"/>
    <property type="molecule type" value="Genomic_DNA"/>
</dbReference>
<dbReference type="EMBL" id="AF326996">
    <property type="protein sequence ID" value="AAG61093.1"/>
    <property type="molecule type" value="Genomic_DNA"/>
</dbReference>
<dbReference type="EMBL" id="AF326997">
    <property type="protein sequence ID" value="AAG61094.1"/>
    <property type="molecule type" value="Genomic_DNA"/>
</dbReference>
<dbReference type="EMBL" id="AF326998">
    <property type="protein sequence ID" value="AAG61095.1"/>
    <property type="molecule type" value="Genomic_DNA"/>
</dbReference>
<dbReference type="EMBL" id="AF326999">
    <property type="protein sequence ID" value="AAG61096.1"/>
    <property type="molecule type" value="Genomic_DNA"/>
</dbReference>
<dbReference type="EMBL" id="AF327000">
    <property type="protein sequence ID" value="AAG61097.1"/>
    <property type="molecule type" value="Genomic_DNA"/>
</dbReference>
<dbReference type="EMBL" id="AF327001">
    <property type="protein sequence ID" value="AAG61098.1"/>
    <property type="molecule type" value="Genomic_DNA"/>
</dbReference>
<dbReference type="EMBL" id="AF327002">
    <property type="protein sequence ID" value="AAG61099.1"/>
    <property type="molecule type" value="Genomic_DNA"/>
</dbReference>
<dbReference type="EMBL" id="AF327003">
    <property type="protein sequence ID" value="AAG61100.1"/>
    <property type="molecule type" value="Genomic_DNA"/>
</dbReference>
<dbReference type="EMBL" id="AF327004">
    <property type="protein sequence ID" value="AAG61101.1"/>
    <property type="molecule type" value="Genomic_DNA"/>
</dbReference>
<dbReference type="EMBL" id="AF327005">
    <property type="protein sequence ID" value="AAG61102.1"/>
    <property type="molecule type" value="Genomic_DNA"/>
</dbReference>
<dbReference type="EMBL" id="AF327006">
    <property type="protein sequence ID" value="AAG61103.1"/>
    <property type="molecule type" value="Genomic_DNA"/>
</dbReference>
<dbReference type="EMBL" id="AF327007">
    <property type="protein sequence ID" value="AAG61104.1"/>
    <property type="molecule type" value="Genomic_DNA"/>
</dbReference>
<dbReference type="EMBL" id="AF327011">
    <property type="protein sequence ID" value="AAG61108.1"/>
    <property type="molecule type" value="Genomic_DNA"/>
</dbReference>
<dbReference type="EMBL" id="AF327012">
    <property type="protein sequence ID" value="AAG61109.1"/>
    <property type="molecule type" value="Genomic_DNA"/>
</dbReference>
<dbReference type="EMBL" id="AF327013">
    <property type="protein sequence ID" value="AAG61110.1"/>
    <property type="molecule type" value="Genomic_DNA"/>
</dbReference>
<dbReference type="EMBL" id="AF327014">
    <property type="protein sequence ID" value="AAG61111.1"/>
    <property type="molecule type" value="Genomic_DNA"/>
</dbReference>
<dbReference type="EMBL" id="AF327015">
    <property type="protein sequence ID" value="AAG61112.1"/>
    <property type="molecule type" value="Genomic_DNA"/>
</dbReference>
<dbReference type="EMBL" id="AF327016">
    <property type="protein sequence ID" value="AAG61113.1"/>
    <property type="molecule type" value="Genomic_DNA"/>
</dbReference>
<dbReference type="EMBL" id="AF327326">
    <property type="protein sequence ID" value="AAK11230.1"/>
    <property type="molecule type" value="Genomic_DNA"/>
</dbReference>
<dbReference type="EMBL" id="AF327327">
    <property type="protein sequence ID" value="AAK11231.1"/>
    <property type="molecule type" value="Genomic_DNA"/>
</dbReference>
<dbReference type="EMBL" id="AF327328">
    <property type="protein sequence ID" value="AAK11232.1"/>
    <property type="molecule type" value="Genomic_DNA"/>
</dbReference>
<dbReference type="EMBL" id="AF327330">
    <property type="protein sequence ID" value="AAK11234.1"/>
    <property type="molecule type" value="Genomic_DNA"/>
</dbReference>
<dbReference type="EMBL" id="AF327331">
    <property type="protein sequence ID" value="AAK11235.1"/>
    <property type="molecule type" value="Genomic_DNA"/>
</dbReference>
<dbReference type="EMBL" id="AF327332">
    <property type="protein sequence ID" value="AAK11236.1"/>
    <property type="molecule type" value="Genomic_DNA"/>
</dbReference>
<dbReference type="EMBL" id="AF327333">
    <property type="protein sequence ID" value="AAK11237.1"/>
    <property type="molecule type" value="Genomic_DNA"/>
</dbReference>
<dbReference type="EMBL" id="AF279346">
    <property type="protein sequence ID" value="AAG31466.1"/>
    <property type="molecule type" value="Genomic_DNA"/>
</dbReference>
<dbReference type="EMBL" id="AF279354">
    <property type="protein sequence ID" value="AAG31469.1"/>
    <property type="molecule type" value="Genomic_DNA"/>
</dbReference>
<dbReference type="EMBL" id="AE001273">
    <property type="protein sequence ID" value="AAC67710.1"/>
    <property type="molecule type" value="Genomic_DNA"/>
</dbReference>
<dbReference type="PIR" id="C71553">
    <property type="entry name" value="C71553"/>
</dbReference>
<dbReference type="RefSeq" id="NP_219622.1">
    <property type="nucleotide sequence ID" value="NC_000117.1"/>
</dbReference>
<dbReference type="RefSeq" id="WP_009871466.1">
    <property type="nucleotide sequence ID" value="NC_000117.1"/>
</dbReference>
<dbReference type="PDB" id="6E6A">
    <property type="method" value="X-ray"/>
    <property type="resolution" value="1.95 A"/>
    <property type="chains" value="A/B=87-246"/>
</dbReference>
<dbReference type="PDB" id="6E7E">
    <property type="method" value="X-ray"/>
    <property type="resolution" value="1.12 A"/>
    <property type="chains" value="A=87-246"/>
</dbReference>
<dbReference type="PDBsum" id="6E6A"/>
<dbReference type="PDBsum" id="6E7E"/>
<dbReference type="SMR" id="P0CI27"/>
<dbReference type="IntAct" id="P0CI27">
    <property type="interactions" value="3"/>
</dbReference>
<dbReference type="MINT" id="P0CI27"/>
<dbReference type="STRING" id="272561.CT_119"/>
<dbReference type="EnsemblBacteria" id="AAC67710">
    <property type="protein sequence ID" value="AAC67710"/>
    <property type="gene ID" value="CT_119"/>
</dbReference>
<dbReference type="GeneID" id="884147"/>
<dbReference type="KEGG" id="ctr:CT_119"/>
<dbReference type="PATRIC" id="fig|272561.5.peg.131"/>
<dbReference type="HOGENOM" id="CLU_067042_0_0_0"/>
<dbReference type="InParanoid" id="P0CI27"/>
<dbReference type="OrthoDB" id="19210at2"/>
<dbReference type="Proteomes" id="UP000000431">
    <property type="component" value="Chromosome"/>
</dbReference>
<dbReference type="GO" id="GO:0005576">
    <property type="term" value="C:extracellular region"/>
    <property type="evidence" value="ECO:0007669"/>
    <property type="project" value="UniProtKB-SubCell"/>
</dbReference>
<dbReference type="GO" id="GO:0033644">
    <property type="term" value="C:host cell membrane"/>
    <property type="evidence" value="ECO:0007669"/>
    <property type="project" value="UniProtKB-KW"/>
</dbReference>
<dbReference type="GO" id="GO:0140221">
    <property type="term" value="C:pathogen-containing vacuole membrane"/>
    <property type="evidence" value="ECO:0000314"/>
    <property type="project" value="UniProtKB"/>
</dbReference>
<evidence type="ECO:0000250" key="1">
    <source>
        <dbReference type="UniProtKB" id="A0A0H3MD02"/>
    </source>
</evidence>
<evidence type="ECO:0000255" key="2"/>
<evidence type="ECO:0000256" key="3">
    <source>
        <dbReference type="SAM" id="MobiDB-lite"/>
    </source>
</evidence>
<evidence type="ECO:0000269" key="4">
    <source>
    </source>
</evidence>
<evidence type="ECO:0000305" key="5"/>
<evidence type="ECO:0000305" key="6">
    <source>
    </source>
</evidence>
<evidence type="ECO:0000305" key="7">
    <source>
    </source>
</evidence>
<evidence type="ECO:0007829" key="8">
    <source>
        <dbReference type="PDB" id="6E7E"/>
    </source>
</evidence>
<proteinExistence type="evidence at protein level"/>